<gene>
    <name type="ordered locus">MJ1613</name>
</gene>
<feature type="chain" id="PRO_0000107436" description="Uncharacterized protein MJ1613">
    <location>
        <begin position="1"/>
        <end position="255"/>
    </location>
</feature>
<dbReference type="EMBL" id="L77117">
    <property type="protein sequence ID" value="AAB99633.1"/>
    <property type="molecule type" value="Genomic_DNA"/>
</dbReference>
<dbReference type="PIR" id="D64501">
    <property type="entry name" value="D64501"/>
</dbReference>
<dbReference type="RefSeq" id="WP_010871138.1">
    <property type="nucleotide sequence ID" value="NC_000909.1"/>
</dbReference>
<dbReference type="STRING" id="243232.MJ_1613"/>
<dbReference type="PaxDb" id="243232-MJ_1613"/>
<dbReference type="EnsemblBacteria" id="AAB99633">
    <property type="protein sequence ID" value="AAB99633"/>
    <property type="gene ID" value="MJ_1613"/>
</dbReference>
<dbReference type="GeneID" id="1452522"/>
<dbReference type="KEGG" id="mja:MJ_1613"/>
<dbReference type="eggNOG" id="arCOG01870">
    <property type="taxonomic scope" value="Archaea"/>
</dbReference>
<dbReference type="HOGENOM" id="CLU_086012_0_0_2"/>
<dbReference type="InParanoid" id="Q59008"/>
<dbReference type="OrthoDB" id="64585at2157"/>
<dbReference type="Proteomes" id="UP000000805">
    <property type="component" value="Chromosome"/>
</dbReference>
<dbReference type="InterPro" id="IPR002808">
    <property type="entry name" value="AdoCbi_amidolase"/>
</dbReference>
<dbReference type="InterPro" id="IPR052209">
    <property type="entry name" value="CbiZ"/>
</dbReference>
<dbReference type="PANTHER" id="PTHR35336">
    <property type="entry name" value="ADENOSYLCOBINAMIDE AMIDOHYDROLASE"/>
    <property type="match status" value="1"/>
</dbReference>
<dbReference type="PANTHER" id="PTHR35336:SF5">
    <property type="entry name" value="ADENOSYLCOBINAMIDE AMIDOHYDROLASE"/>
    <property type="match status" value="1"/>
</dbReference>
<dbReference type="Pfam" id="PF01955">
    <property type="entry name" value="CbiZ"/>
    <property type="match status" value="1"/>
</dbReference>
<name>Y1613_METJA</name>
<protein>
    <recommendedName>
        <fullName>Uncharacterized protein MJ1613</fullName>
    </recommendedName>
</protein>
<keyword id="KW-1185">Reference proteome</keyword>
<organism>
    <name type="scientific">Methanocaldococcus jannaschii (strain ATCC 43067 / DSM 2661 / JAL-1 / JCM 10045 / NBRC 100440)</name>
    <name type="common">Methanococcus jannaschii</name>
    <dbReference type="NCBI Taxonomy" id="243232"/>
    <lineage>
        <taxon>Archaea</taxon>
        <taxon>Methanobacteriati</taxon>
        <taxon>Methanobacteriota</taxon>
        <taxon>Methanomada group</taxon>
        <taxon>Methanococci</taxon>
        <taxon>Methanococcales</taxon>
        <taxon>Methanocaldococcaceae</taxon>
        <taxon>Methanocaldococcus</taxon>
    </lineage>
</organism>
<reference key="1">
    <citation type="journal article" date="1996" name="Science">
        <title>Complete genome sequence of the methanogenic archaeon, Methanococcus jannaschii.</title>
        <authorList>
            <person name="Bult C.J."/>
            <person name="White O."/>
            <person name="Olsen G.J."/>
            <person name="Zhou L."/>
            <person name="Fleischmann R.D."/>
            <person name="Sutton G.G."/>
            <person name="Blake J.A."/>
            <person name="FitzGerald L.M."/>
            <person name="Clayton R.A."/>
            <person name="Gocayne J.D."/>
            <person name="Kerlavage A.R."/>
            <person name="Dougherty B.A."/>
            <person name="Tomb J.-F."/>
            <person name="Adams M.D."/>
            <person name="Reich C.I."/>
            <person name="Overbeek R."/>
            <person name="Kirkness E.F."/>
            <person name="Weinstock K.G."/>
            <person name="Merrick J.M."/>
            <person name="Glodek A."/>
            <person name="Scott J.L."/>
            <person name="Geoghagen N.S.M."/>
            <person name="Weidman J.F."/>
            <person name="Fuhrmann J.L."/>
            <person name="Nguyen D."/>
            <person name="Utterback T.R."/>
            <person name="Kelley J.M."/>
            <person name="Peterson J.D."/>
            <person name="Sadow P.W."/>
            <person name="Hanna M.C."/>
            <person name="Cotton M.D."/>
            <person name="Roberts K.M."/>
            <person name="Hurst M.A."/>
            <person name="Kaine B.P."/>
            <person name="Borodovsky M."/>
            <person name="Klenk H.-P."/>
            <person name="Fraser C.M."/>
            <person name="Smith H.O."/>
            <person name="Woese C.R."/>
            <person name="Venter J.C."/>
        </authorList>
    </citation>
    <scope>NUCLEOTIDE SEQUENCE [LARGE SCALE GENOMIC DNA]</scope>
    <source>
        <strain>ATCC 43067 / DSM 2661 / JAL-1 / JCM 10045 / NBRC 100440</strain>
    </source>
</reference>
<proteinExistence type="predicted"/>
<accession>Q59008</accession>
<sequence>MIEKVLEMDDWKAYKIPHTVEIDGMVEETKTLIIEFKNKRKVLSTREGFKEVKYVGNHSIPVPFWDKVHNYKDYENQVLNKIGIKKEDIALLSTGANMDNLAVAKEEFDEFYVVAFTTAGAKHNAIRLGDEEADYIEKDFKTYKIVDGKIVPKEEIGTVNIILITNANLTDGAMARAIITITEAKTNAFQELNIRSTKHPELQATGTGTDNIVVVKGFGSGVDYTGGHTKMGEMIAKAVKRSVIEALIKQDKIKI</sequence>